<organism>
    <name type="scientific">Purpureocillium lilacinum</name>
    <name type="common">Paecilomyces lilacinus</name>
    <dbReference type="NCBI Taxonomy" id="33203"/>
    <lineage>
        <taxon>Eukaryota</taxon>
        <taxon>Fungi</taxon>
        <taxon>Dikarya</taxon>
        <taxon>Ascomycota</taxon>
        <taxon>Pezizomycotina</taxon>
        <taxon>Sordariomycetes</taxon>
        <taxon>Hypocreomycetidae</taxon>
        <taxon>Hypocreales</taxon>
        <taxon>Ophiocordycipitaceae</taxon>
        <taxon>Purpureocillium</taxon>
    </lineage>
</organism>
<name>LCSS_PURLI</name>
<evidence type="ECO:0000269" key="1">
    <source>
    </source>
</evidence>
<evidence type="ECO:0000303" key="2">
    <source>
    </source>
</evidence>
<evidence type="ECO:0000305" key="3">
    <source>
    </source>
</evidence>
<keyword id="KW-1185">Reference proteome</keyword>
<feature type="chain" id="PRO_0000446617" description="Leucinostatins biosynthesis cluster protein S">
    <location>
        <begin position="1"/>
        <end position="243"/>
    </location>
</feature>
<sequence length="243" mass="27141">MTLYFAYPNAESGDCKCLGLIFFVKDYYGEKVFPPIGCVGITQFENQASKTNYFSNVDKARSLQKRFMEEAGVDVVGRVKALLQSIVPPGLPVRLAQEDGKSYFAGLLRLINSSALIHADYGPFDGPGWEIGAIKAQLTWNILLKEVRGGESVVYNRFWKGKEDDDKYRDVTKSYGYSRDVIDGCESKKIAPIVGQIALFNPRNFHEVLAIENPEKVSRYTFSSFIGYLPPTAPEGPAIILWS</sequence>
<proteinExistence type="evidence at transcript level"/>
<protein>
    <recommendedName>
        <fullName evidence="2">Leucinostatins biosynthesis cluster protein S</fullName>
    </recommendedName>
</protein>
<gene>
    <name evidence="2" type="primary">lcsS</name>
    <name type="ORF">PCL_01813</name>
    <name type="ORF">VFPBJ_02536</name>
    <name type="ORF">VFPFJ_04709</name>
</gene>
<comment type="function">
    <text evidence="1 3">Part of the gene cluster that mediates the biosynthesis of the lipopeptide antibiotics leucinostatins that show extensive biological activities, including antimalarial, antiviral, antibacterial, antifungal, and antitumor activities, as well as phytotoxic (PubMed:27416025). The function of lcsS within the leucinostatins biosynthesis has not been identified yet (Probable).</text>
</comment>
<comment type="induction">
    <text evidence="1">Expression is positively regulated by the leucinostatins biosynthesis cluster-specific transcription regulator lcsF.</text>
</comment>
<dbReference type="EMBL" id="LSBH01000002">
    <property type="protein sequence ID" value="OAQ83770.1"/>
    <property type="molecule type" value="Genomic_DNA"/>
</dbReference>
<dbReference type="EMBL" id="LSBI01000004">
    <property type="protein sequence ID" value="OAQ90550.1"/>
    <property type="molecule type" value="Genomic_DNA"/>
</dbReference>
<dbReference type="EMBL" id="LCWV01000014">
    <property type="protein sequence ID" value="PWI68724.1"/>
    <property type="molecule type" value="Genomic_DNA"/>
</dbReference>
<dbReference type="RefSeq" id="XP_018179269.1">
    <property type="nucleotide sequence ID" value="XM_018321789.1"/>
</dbReference>
<dbReference type="SMR" id="A0A179HM59"/>
<dbReference type="GeneID" id="28886838"/>
<dbReference type="KEGG" id="plj:28886838"/>
<dbReference type="OrthoDB" id="5282017at2759"/>
<dbReference type="Proteomes" id="UP000078240">
    <property type="component" value="Unassembled WGS sequence"/>
</dbReference>
<dbReference type="Proteomes" id="UP000078340">
    <property type="component" value="Unassembled WGS sequence"/>
</dbReference>
<dbReference type="Proteomes" id="UP000245956">
    <property type="component" value="Unassembled WGS sequence"/>
</dbReference>
<dbReference type="InterPro" id="IPR055091">
    <property type="entry name" value="WelO5-like"/>
</dbReference>
<dbReference type="Pfam" id="PF22814">
    <property type="entry name" value="WelO5"/>
    <property type="match status" value="1"/>
</dbReference>
<accession>A0A179HM59</accession>
<reference key="1">
    <citation type="journal article" date="2016" name="Front. Microbiol.">
        <title>Genome and transcriptome sequences reveal the specific parasitism of the nematophagous Purpureocillium lilacinum 36-1.</title>
        <authorList>
            <person name="Xie J."/>
            <person name="Li S."/>
            <person name="Mo C."/>
            <person name="Xiao X."/>
            <person name="Peng D."/>
            <person name="Wang G."/>
            <person name="Xiao Y."/>
        </authorList>
    </citation>
    <scope>NUCLEOTIDE SEQUENCE [LARGE SCALE GENOMIC DNA]</scope>
    <source>
        <strain>36-1</strain>
    </source>
</reference>
<reference key="2">
    <citation type="journal article" date="2016" name="PLoS Pathog.">
        <title>Biosynthesis of antibiotic leucinostatins in bio-control fungus Purpureocillium lilacinum and their inhibition on phytophthora revealed by genome mining.</title>
        <authorList>
            <person name="Wang G."/>
            <person name="Liu Z."/>
            <person name="Lin R."/>
            <person name="Li E."/>
            <person name="Mao Z."/>
            <person name="Ling J."/>
            <person name="Yang Y."/>
            <person name="Yin W.B."/>
            <person name="Xie B."/>
        </authorList>
    </citation>
    <scope>NUCLEOTIDE SEQUENCE [LARGE SCALE GENOMIC DNA]</scope>
    <scope>IDENTIFICATION</scope>
    <scope>FUNCTION</scope>
    <scope>INDUCTION</scope>
    <source>
        <strain>PLBJ-1</strain>
    </source>
</reference>